<comment type="function">
    <text evidence="1">Presumably involved in the processing and regular turnover of intracellular proteins. Catalyzes the removal of unsubstituted N-terminal amino acids from various peptides.</text>
</comment>
<comment type="catalytic activity">
    <reaction evidence="1">
        <text>Release of an N-terminal amino acid, Xaa-|-Yaa-, in which Xaa is preferably Leu, but may be other amino acids including Pro although not Arg or Lys, and Yaa may be Pro. Amino acid amides and methyl esters are also readily hydrolyzed, but rates on arylamides are exceedingly low.</text>
        <dbReference type="EC" id="3.4.11.1"/>
    </reaction>
</comment>
<comment type="catalytic activity">
    <reaction evidence="1">
        <text>Release of an N-terminal amino acid, preferentially leucine, but not glutamic or aspartic acids.</text>
        <dbReference type="EC" id="3.4.11.10"/>
    </reaction>
</comment>
<comment type="cofactor">
    <cofactor evidence="1">
        <name>Mn(2+)</name>
        <dbReference type="ChEBI" id="CHEBI:29035"/>
    </cofactor>
    <text evidence="1">Binds 2 manganese ions per subunit.</text>
</comment>
<comment type="subcellular location">
    <subcellularLocation>
        <location evidence="1">Cytoplasm</location>
    </subcellularLocation>
</comment>
<comment type="similarity">
    <text evidence="1">Belongs to the peptidase M17 family.</text>
</comment>
<sequence length="496" mass="50345">MTPPSLSLTASAPSSSASSDVLVLGARSDDEGVIVLSAGARDGLAAELAAVGFSGGKDELVRLPGAEGGPALAVVGMPDERDEDAFRYAAGTAVRQLAGVQRVALALPTETDAQLGATLEGAALGAYAFTEYREKTKAGVKEPVAEIQVVGRSDEGDALIARAATVAEAAGLVKDLVNAPPLDLYPATFAERVEALAADLPVSVEVWDETRLAADGFGGILGVGQGSARPPRLVKVVYSPDSATRHLALVGKGITFDSGGLSLKPASGMVGMKYDMTGAAAVLAAALAAAKLRLPVRVTAWLCLAENMPSGSAIRPNDVLRIRGGRTVEVLNTDAEGRLVLADGLVAAGEERPDAIVDVATLTGAAEVALGTRYAAVMGSDDLVADVIAAAKASGELLWPMPLAGELRATIASDVADIANANPGNTAGGMLLAGVFLQEFIGRSGDAEDSPRIPWAHLDIAGPAKGPSAPYGFTGKGPSAVSVRALIRLAEDFSGR</sequence>
<keyword id="KW-0031">Aminopeptidase</keyword>
<keyword id="KW-0963">Cytoplasm</keyword>
<keyword id="KW-0378">Hydrolase</keyword>
<keyword id="KW-0464">Manganese</keyword>
<keyword id="KW-0479">Metal-binding</keyword>
<keyword id="KW-0645">Protease</keyword>
<keyword id="KW-1185">Reference proteome</keyword>
<proteinExistence type="inferred from homology"/>
<feature type="chain" id="PRO_0000165762" description="Probable cytosol aminopeptidase">
    <location>
        <begin position="1"/>
        <end position="496"/>
    </location>
</feature>
<feature type="active site" evidence="1">
    <location>
        <position position="264"/>
    </location>
</feature>
<feature type="active site" evidence="1">
    <location>
        <position position="338"/>
    </location>
</feature>
<feature type="binding site" evidence="1">
    <location>
        <position position="252"/>
    </location>
    <ligand>
        <name>Mn(2+)</name>
        <dbReference type="ChEBI" id="CHEBI:29035"/>
        <label>2</label>
    </ligand>
</feature>
<feature type="binding site" evidence="1">
    <location>
        <position position="257"/>
    </location>
    <ligand>
        <name>Mn(2+)</name>
        <dbReference type="ChEBI" id="CHEBI:29035"/>
        <label>1</label>
    </ligand>
</feature>
<feature type="binding site" evidence="1">
    <location>
        <position position="257"/>
    </location>
    <ligand>
        <name>Mn(2+)</name>
        <dbReference type="ChEBI" id="CHEBI:29035"/>
        <label>2</label>
    </ligand>
</feature>
<feature type="binding site" evidence="1">
    <location>
        <position position="275"/>
    </location>
    <ligand>
        <name>Mn(2+)</name>
        <dbReference type="ChEBI" id="CHEBI:29035"/>
        <label>2</label>
    </ligand>
</feature>
<feature type="binding site" evidence="1">
    <location>
        <position position="334"/>
    </location>
    <ligand>
        <name>Mn(2+)</name>
        <dbReference type="ChEBI" id="CHEBI:29035"/>
        <label>1</label>
    </ligand>
</feature>
<feature type="binding site" evidence="1">
    <location>
        <position position="336"/>
    </location>
    <ligand>
        <name>Mn(2+)</name>
        <dbReference type="ChEBI" id="CHEBI:29035"/>
        <label>1</label>
    </ligand>
</feature>
<feature type="binding site" evidence="1">
    <location>
        <position position="336"/>
    </location>
    <ligand>
        <name>Mn(2+)</name>
        <dbReference type="ChEBI" id="CHEBI:29035"/>
        <label>2</label>
    </ligand>
</feature>
<dbReference type="EC" id="3.4.11.1" evidence="1"/>
<dbReference type="EC" id="3.4.11.10" evidence="1"/>
<dbReference type="EMBL" id="AE016822">
    <property type="protein sequence ID" value="AAT88883.1"/>
    <property type="molecule type" value="Genomic_DNA"/>
</dbReference>
<dbReference type="RefSeq" id="WP_011185879.1">
    <property type="nucleotide sequence ID" value="NC_006087.1"/>
</dbReference>
<dbReference type="SMR" id="Q6AFG2"/>
<dbReference type="STRING" id="281090.Lxx10160"/>
<dbReference type="KEGG" id="lxx:Lxx10160"/>
<dbReference type="eggNOG" id="COG0260">
    <property type="taxonomic scope" value="Bacteria"/>
</dbReference>
<dbReference type="HOGENOM" id="CLU_013734_2_2_11"/>
<dbReference type="Proteomes" id="UP000001306">
    <property type="component" value="Chromosome"/>
</dbReference>
<dbReference type="GO" id="GO:0005737">
    <property type="term" value="C:cytoplasm"/>
    <property type="evidence" value="ECO:0007669"/>
    <property type="project" value="UniProtKB-SubCell"/>
</dbReference>
<dbReference type="GO" id="GO:0030145">
    <property type="term" value="F:manganese ion binding"/>
    <property type="evidence" value="ECO:0007669"/>
    <property type="project" value="UniProtKB-UniRule"/>
</dbReference>
<dbReference type="GO" id="GO:0070006">
    <property type="term" value="F:metalloaminopeptidase activity"/>
    <property type="evidence" value="ECO:0007669"/>
    <property type="project" value="InterPro"/>
</dbReference>
<dbReference type="GO" id="GO:0006508">
    <property type="term" value="P:proteolysis"/>
    <property type="evidence" value="ECO:0007669"/>
    <property type="project" value="UniProtKB-KW"/>
</dbReference>
<dbReference type="CDD" id="cd00433">
    <property type="entry name" value="Peptidase_M17"/>
    <property type="match status" value="1"/>
</dbReference>
<dbReference type="Gene3D" id="3.40.220.10">
    <property type="entry name" value="Leucine Aminopeptidase, subunit E, domain 1"/>
    <property type="match status" value="1"/>
</dbReference>
<dbReference type="Gene3D" id="3.40.630.10">
    <property type="entry name" value="Zn peptidases"/>
    <property type="match status" value="1"/>
</dbReference>
<dbReference type="HAMAP" id="MF_00181">
    <property type="entry name" value="Cytosol_peptidase_M17"/>
    <property type="match status" value="1"/>
</dbReference>
<dbReference type="InterPro" id="IPR011356">
    <property type="entry name" value="Leucine_aapep/pepB"/>
</dbReference>
<dbReference type="InterPro" id="IPR043472">
    <property type="entry name" value="Macro_dom-like"/>
</dbReference>
<dbReference type="InterPro" id="IPR000819">
    <property type="entry name" value="Peptidase_M17_C"/>
</dbReference>
<dbReference type="InterPro" id="IPR023042">
    <property type="entry name" value="Peptidase_M17_leu_NH2_pept"/>
</dbReference>
<dbReference type="InterPro" id="IPR008283">
    <property type="entry name" value="Peptidase_M17_N"/>
</dbReference>
<dbReference type="NCBIfam" id="NF002073">
    <property type="entry name" value="PRK00913.1-2"/>
    <property type="match status" value="1"/>
</dbReference>
<dbReference type="PANTHER" id="PTHR11963:SF23">
    <property type="entry name" value="CYTOSOL AMINOPEPTIDASE"/>
    <property type="match status" value="1"/>
</dbReference>
<dbReference type="PANTHER" id="PTHR11963">
    <property type="entry name" value="LEUCINE AMINOPEPTIDASE-RELATED"/>
    <property type="match status" value="1"/>
</dbReference>
<dbReference type="Pfam" id="PF00883">
    <property type="entry name" value="Peptidase_M17"/>
    <property type="match status" value="1"/>
</dbReference>
<dbReference type="Pfam" id="PF02789">
    <property type="entry name" value="Peptidase_M17_N"/>
    <property type="match status" value="1"/>
</dbReference>
<dbReference type="PRINTS" id="PR00481">
    <property type="entry name" value="LAMNOPPTDASE"/>
</dbReference>
<dbReference type="SUPFAM" id="SSF52949">
    <property type="entry name" value="Macro domain-like"/>
    <property type="match status" value="1"/>
</dbReference>
<dbReference type="SUPFAM" id="SSF53187">
    <property type="entry name" value="Zn-dependent exopeptidases"/>
    <property type="match status" value="1"/>
</dbReference>
<dbReference type="PROSITE" id="PS00631">
    <property type="entry name" value="CYTOSOL_AP"/>
    <property type="match status" value="1"/>
</dbReference>
<reference key="1">
    <citation type="journal article" date="2004" name="Mol. Plant Microbe Interact.">
        <title>The genome sequence of the Gram-positive sugarcane pathogen Leifsonia xyli subsp. xyli.</title>
        <authorList>
            <person name="Monteiro-Vitorello C.B."/>
            <person name="Camargo L.E.A."/>
            <person name="Van Sluys M.A."/>
            <person name="Kitajima J.P."/>
            <person name="Truffi D."/>
            <person name="do Amaral A.M."/>
            <person name="Harakava R."/>
            <person name="de Oliveira J.C.F."/>
            <person name="Wood D."/>
            <person name="de Oliveira M.C."/>
            <person name="Miyaki C.Y."/>
            <person name="Takita M.A."/>
            <person name="da Silva A.C.R."/>
            <person name="Furlan L.R."/>
            <person name="Carraro D.M."/>
            <person name="Camarotte G."/>
            <person name="Almeida N.F. Jr."/>
            <person name="Carrer H."/>
            <person name="Coutinho L.L."/>
            <person name="El-Dorry H.A."/>
            <person name="Ferro M.I.T."/>
            <person name="Gagliardi P.R."/>
            <person name="Giglioti E."/>
            <person name="Goldman M.H.S."/>
            <person name="Goldman G.H."/>
            <person name="Kimura E.T."/>
            <person name="Ferro E.S."/>
            <person name="Kuramae E.E."/>
            <person name="Lemos E.G.M."/>
            <person name="Lemos M.V.F."/>
            <person name="Mauro S.M.Z."/>
            <person name="Machado M.A."/>
            <person name="Marino C.L."/>
            <person name="Menck C.F."/>
            <person name="Nunes L.R."/>
            <person name="Oliveira R.C."/>
            <person name="Pereira G.G."/>
            <person name="Siqueira W."/>
            <person name="de Souza A.A."/>
            <person name="Tsai S.M."/>
            <person name="Zanca A.S."/>
            <person name="Simpson A.J.G."/>
            <person name="Brumbley S.M."/>
            <person name="Setubal J.C."/>
        </authorList>
    </citation>
    <scope>NUCLEOTIDE SEQUENCE [LARGE SCALE GENOMIC DNA]</scope>
    <source>
        <strain>CTCB07</strain>
    </source>
</reference>
<protein>
    <recommendedName>
        <fullName evidence="1">Probable cytosol aminopeptidase</fullName>
        <ecNumber evidence="1">3.4.11.1</ecNumber>
    </recommendedName>
    <alternativeName>
        <fullName evidence="1">Leucine aminopeptidase</fullName>
        <shortName evidence="1">LAP</shortName>
        <ecNumber evidence="1">3.4.11.10</ecNumber>
    </alternativeName>
    <alternativeName>
        <fullName evidence="1">Leucyl aminopeptidase</fullName>
    </alternativeName>
</protein>
<organism>
    <name type="scientific">Leifsonia xyli subsp. xyli (strain CTCB07)</name>
    <dbReference type="NCBI Taxonomy" id="281090"/>
    <lineage>
        <taxon>Bacteria</taxon>
        <taxon>Bacillati</taxon>
        <taxon>Actinomycetota</taxon>
        <taxon>Actinomycetes</taxon>
        <taxon>Micrococcales</taxon>
        <taxon>Microbacteriaceae</taxon>
        <taxon>Leifsonia</taxon>
    </lineage>
</organism>
<name>AMPA_LEIXX</name>
<gene>
    <name evidence="1" type="primary">pepA</name>
    <name type="synonym">pep</name>
    <name type="ordered locus">Lxx10160</name>
</gene>
<evidence type="ECO:0000255" key="1">
    <source>
        <dbReference type="HAMAP-Rule" id="MF_00181"/>
    </source>
</evidence>
<accession>Q6AFG2</accession>